<reference key="1">
    <citation type="journal article" date="2002" name="Nat. Genet.">
        <title>Genome sequence of the endocellular obligate symbiont of tsetse flies, Wigglesworthia glossinidia.</title>
        <authorList>
            <person name="Akman L."/>
            <person name="Yamashita A."/>
            <person name="Watanabe H."/>
            <person name="Oshima K."/>
            <person name="Shiba T."/>
            <person name="Hattori M."/>
            <person name="Aksoy S."/>
        </authorList>
    </citation>
    <scope>NUCLEOTIDE SEQUENCE [LARGE SCALE GENOMIC DNA]</scope>
</reference>
<dbReference type="EMBL" id="BA000021">
    <property type="protein sequence ID" value="BAC24537.1"/>
    <property type="molecule type" value="Genomic_DNA"/>
</dbReference>
<dbReference type="SMR" id="Q8D2G3"/>
<dbReference type="STRING" id="36870.gene:10368891"/>
<dbReference type="KEGG" id="wbr:tsf"/>
<dbReference type="eggNOG" id="COG0264">
    <property type="taxonomic scope" value="Bacteria"/>
</dbReference>
<dbReference type="HOGENOM" id="CLU_047155_0_2_6"/>
<dbReference type="OrthoDB" id="9808348at2"/>
<dbReference type="Proteomes" id="UP000000562">
    <property type="component" value="Chromosome"/>
</dbReference>
<dbReference type="GO" id="GO:0005737">
    <property type="term" value="C:cytoplasm"/>
    <property type="evidence" value="ECO:0007669"/>
    <property type="project" value="UniProtKB-SubCell"/>
</dbReference>
<dbReference type="GO" id="GO:0003746">
    <property type="term" value="F:translation elongation factor activity"/>
    <property type="evidence" value="ECO:0007669"/>
    <property type="project" value="UniProtKB-UniRule"/>
</dbReference>
<dbReference type="CDD" id="cd14275">
    <property type="entry name" value="UBA_EF-Ts"/>
    <property type="match status" value="1"/>
</dbReference>
<dbReference type="FunFam" id="1.10.8.10:FF:000001">
    <property type="entry name" value="Elongation factor Ts"/>
    <property type="match status" value="1"/>
</dbReference>
<dbReference type="Gene3D" id="1.10.286.20">
    <property type="match status" value="1"/>
</dbReference>
<dbReference type="Gene3D" id="1.10.8.10">
    <property type="entry name" value="DNA helicase RuvA subunit, C-terminal domain"/>
    <property type="match status" value="1"/>
</dbReference>
<dbReference type="Gene3D" id="3.30.479.20">
    <property type="entry name" value="Elongation factor Ts, dimerisation domain"/>
    <property type="match status" value="2"/>
</dbReference>
<dbReference type="HAMAP" id="MF_00050">
    <property type="entry name" value="EF_Ts"/>
    <property type="match status" value="1"/>
</dbReference>
<dbReference type="InterPro" id="IPR036402">
    <property type="entry name" value="EF-Ts_dimer_sf"/>
</dbReference>
<dbReference type="InterPro" id="IPR001816">
    <property type="entry name" value="Transl_elong_EFTs/EF1B"/>
</dbReference>
<dbReference type="InterPro" id="IPR014039">
    <property type="entry name" value="Transl_elong_EFTs/EF1B_dimer"/>
</dbReference>
<dbReference type="InterPro" id="IPR018101">
    <property type="entry name" value="Transl_elong_Ts_CS"/>
</dbReference>
<dbReference type="InterPro" id="IPR009060">
    <property type="entry name" value="UBA-like_sf"/>
</dbReference>
<dbReference type="NCBIfam" id="TIGR00116">
    <property type="entry name" value="tsf"/>
    <property type="match status" value="1"/>
</dbReference>
<dbReference type="PANTHER" id="PTHR11741">
    <property type="entry name" value="ELONGATION FACTOR TS"/>
    <property type="match status" value="1"/>
</dbReference>
<dbReference type="PANTHER" id="PTHR11741:SF0">
    <property type="entry name" value="ELONGATION FACTOR TS, MITOCHONDRIAL"/>
    <property type="match status" value="1"/>
</dbReference>
<dbReference type="Pfam" id="PF00889">
    <property type="entry name" value="EF_TS"/>
    <property type="match status" value="1"/>
</dbReference>
<dbReference type="SUPFAM" id="SSF54713">
    <property type="entry name" value="Elongation factor Ts (EF-Ts), dimerisation domain"/>
    <property type="match status" value="1"/>
</dbReference>
<dbReference type="SUPFAM" id="SSF46934">
    <property type="entry name" value="UBA-like"/>
    <property type="match status" value="1"/>
</dbReference>
<dbReference type="PROSITE" id="PS01127">
    <property type="entry name" value="EF_TS_2"/>
    <property type="match status" value="1"/>
</dbReference>
<proteinExistence type="inferred from homology"/>
<evidence type="ECO:0000255" key="1">
    <source>
        <dbReference type="HAMAP-Rule" id="MF_00050"/>
    </source>
</evidence>
<sequence>MVNKLSNLIKEMRNRTNLGILECKKALLENNENIELAIQFIKKSGTLNIEKNVNNLSNGIVLAKVKKEKKYGALIELNSETDFVAKNKQFQNFGKEIISIILKEKISDIDILRKFMKEKISYFSLTFKEKINIKRIKLFYGKNLFNYIHLKRIGVIVDIKNSTEDMSKKIAMHIAASNPKYISVKSIPNIIKENEKMIYIKSALKNGKTKEIAEKISNGKMKKFFEKIALEEQFFIFDDTKKIKNIINERNIYIKKFIRFEVGENFYPVI</sequence>
<feature type="chain" id="PRO_0000161233" description="Elongation factor Ts">
    <location>
        <begin position="1"/>
        <end position="270"/>
    </location>
</feature>
<feature type="region of interest" description="Involved in Mg(2+) ion dislocation from EF-Tu" evidence="1">
    <location>
        <begin position="81"/>
        <end position="84"/>
    </location>
</feature>
<protein>
    <recommendedName>
        <fullName evidence="1">Elongation factor Ts</fullName>
        <shortName evidence="1">EF-Ts</shortName>
    </recommendedName>
</protein>
<name>EFTS_WIGBR</name>
<comment type="function">
    <text evidence="1">Associates with the EF-Tu.GDP complex and induces the exchange of GDP to GTP. It remains bound to the aminoacyl-tRNA.EF-Tu.GTP complex up to the GTP hydrolysis stage on the ribosome.</text>
</comment>
<comment type="subcellular location">
    <subcellularLocation>
        <location evidence="1">Cytoplasm</location>
    </subcellularLocation>
</comment>
<comment type="similarity">
    <text evidence="1">Belongs to the EF-Ts family.</text>
</comment>
<gene>
    <name evidence="1" type="primary">tsf</name>
    <name type="ordered locus">WIGBR3910</name>
</gene>
<organism>
    <name type="scientific">Wigglesworthia glossinidia brevipalpis</name>
    <dbReference type="NCBI Taxonomy" id="36870"/>
    <lineage>
        <taxon>Bacteria</taxon>
        <taxon>Pseudomonadati</taxon>
        <taxon>Pseudomonadota</taxon>
        <taxon>Gammaproteobacteria</taxon>
        <taxon>Enterobacterales</taxon>
        <taxon>Erwiniaceae</taxon>
        <taxon>Wigglesworthia</taxon>
    </lineage>
</organism>
<keyword id="KW-0963">Cytoplasm</keyword>
<keyword id="KW-0251">Elongation factor</keyword>
<keyword id="KW-0648">Protein biosynthesis</keyword>
<keyword id="KW-1185">Reference proteome</keyword>
<accession>Q8D2G3</accession>